<reference key="1">
    <citation type="submission" date="2007-10" db="EMBL/GenBank/DDBJ databases">
        <title>Complete sequence of Methanococcus maripaludis C6.</title>
        <authorList>
            <consortium name="US DOE Joint Genome Institute"/>
            <person name="Copeland A."/>
            <person name="Lucas S."/>
            <person name="Lapidus A."/>
            <person name="Barry K."/>
            <person name="Glavina del Rio T."/>
            <person name="Dalin E."/>
            <person name="Tice H."/>
            <person name="Pitluck S."/>
            <person name="Clum A."/>
            <person name="Schmutz J."/>
            <person name="Larimer F."/>
            <person name="Land M."/>
            <person name="Hauser L."/>
            <person name="Kyrpides N."/>
            <person name="Mikhailova N."/>
            <person name="Sieprawska-Lupa M."/>
            <person name="Whitman W.B."/>
            <person name="Richardson P."/>
        </authorList>
    </citation>
    <scope>NUCLEOTIDE SEQUENCE [LARGE SCALE GENOMIC DNA]</scope>
    <source>
        <strain>C6 / ATCC BAA-1332</strain>
    </source>
</reference>
<gene>
    <name evidence="1" type="primary">trpF</name>
    <name type="ordered locus">MmarC6_1655</name>
</gene>
<name>TRPF_METM6</name>
<organism>
    <name type="scientific">Methanococcus maripaludis (strain C6 / ATCC BAA-1332)</name>
    <dbReference type="NCBI Taxonomy" id="444158"/>
    <lineage>
        <taxon>Archaea</taxon>
        <taxon>Methanobacteriati</taxon>
        <taxon>Methanobacteriota</taxon>
        <taxon>Methanomada group</taxon>
        <taxon>Methanococci</taxon>
        <taxon>Methanococcales</taxon>
        <taxon>Methanococcaceae</taxon>
        <taxon>Methanococcus</taxon>
    </lineage>
</organism>
<dbReference type="EC" id="5.3.1.24" evidence="1"/>
<dbReference type="EMBL" id="CP000867">
    <property type="protein sequence ID" value="ABX02467.1"/>
    <property type="molecule type" value="Genomic_DNA"/>
</dbReference>
<dbReference type="SMR" id="A9AAU4"/>
<dbReference type="STRING" id="444158.MmarC6_1655"/>
<dbReference type="KEGG" id="mmx:MmarC6_1655"/>
<dbReference type="eggNOG" id="arCOG01983">
    <property type="taxonomic scope" value="Archaea"/>
</dbReference>
<dbReference type="HOGENOM" id="CLU_076364_2_1_2"/>
<dbReference type="OrthoDB" id="27513at2157"/>
<dbReference type="PhylomeDB" id="A9AAU4"/>
<dbReference type="UniPathway" id="UPA00035">
    <property type="reaction ID" value="UER00042"/>
</dbReference>
<dbReference type="GO" id="GO:0004640">
    <property type="term" value="F:phosphoribosylanthranilate isomerase activity"/>
    <property type="evidence" value="ECO:0007669"/>
    <property type="project" value="UniProtKB-UniRule"/>
</dbReference>
<dbReference type="GO" id="GO:0000162">
    <property type="term" value="P:L-tryptophan biosynthetic process"/>
    <property type="evidence" value="ECO:0007669"/>
    <property type="project" value="UniProtKB-UniRule"/>
</dbReference>
<dbReference type="CDD" id="cd00405">
    <property type="entry name" value="PRAI"/>
    <property type="match status" value="1"/>
</dbReference>
<dbReference type="Gene3D" id="3.20.20.70">
    <property type="entry name" value="Aldolase class I"/>
    <property type="match status" value="1"/>
</dbReference>
<dbReference type="HAMAP" id="MF_00135">
    <property type="entry name" value="PRAI"/>
    <property type="match status" value="1"/>
</dbReference>
<dbReference type="InterPro" id="IPR013785">
    <property type="entry name" value="Aldolase_TIM"/>
</dbReference>
<dbReference type="InterPro" id="IPR001240">
    <property type="entry name" value="PRAI_dom"/>
</dbReference>
<dbReference type="InterPro" id="IPR011060">
    <property type="entry name" value="RibuloseP-bd_barrel"/>
</dbReference>
<dbReference type="InterPro" id="IPR044643">
    <property type="entry name" value="TrpF_fam"/>
</dbReference>
<dbReference type="NCBIfam" id="NF002304">
    <property type="entry name" value="PRK01222.2-4"/>
    <property type="match status" value="1"/>
</dbReference>
<dbReference type="PANTHER" id="PTHR42894">
    <property type="entry name" value="N-(5'-PHOSPHORIBOSYL)ANTHRANILATE ISOMERASE"/>
    <property type="match status" value="1"/>
</dbReference>
<dbReference type="PANTHER" id="PTHR42894:SF1">
    <property type="entry name" value="N-(5'-PHOSPHORIBOSYL)ANTHRANILATE ISOMERASE"/>
    <property type="match status" value="1"/>
</dbReference>
<dbReference type="Pfam" id="PF00697">
    <property type="entry name" value="PRAI"/>
    <property type="match status" value="1"/>
</dbReference>
<dbReference type="SUPFAM" id="SSF51366">
    <property type="entry name" value="Ribulose-phoshate binding barrel"/>
    <property type="match status" value="1"/>
</dbReference>
<feature type="chain" id="PRO_1000095926" description="N-(5'-phosphoribosyl)anthranilate isomerase">
    <location>
        <begin position="1"/>
        <end position="211"/>
    </location>
</feature>
<comment type="catalytic activity">
    <reaction evidence="1">
        <text>N-(5-phospho-beta-D-ribosyl)anthranilate = 1-(2-carboxyphenylamino)-1-deoxy-D-ribulose 5-phosphate</text>
        <dbReference type="Rhea" id="RHEA:21540"/>
        <dbReference type="ChEBI" id="CHEBI:18277"/>
        <dbReference type="ChEBI" id="CHEBI:58613"/>
        <dbReference type="EC" id="5.3.1.24"/>
    </reaction>
</comment>
<comment type="pathway">
    <text evidence="1">Amino-acid biosynthesis; L-tryptophan biosynthesis; L-tryptophan from chorismate: step 3/5.</text>
</comment>
<comment type="similarity">
    <text evidence="1">Belongs to the TrpF family.</text>
</comment>
<evidence type="ECO:0000255" key="1">
    <source>
        <dbReference type="HAMAP-Rule" id="MF_00135"/>
    </source>
</evidence>
<sequence>MFIKICGIKTPEELEIVENYGNATGVILECSSKRRIGFETAKNLVNLSNIPVFAVSTTSKVSVWENIIELTGTNYLQMHSDIDQKAIDFIKNEYGCFIMKSFKIPEKSESPENDAEKIISDIESYEVDRILLDTGKGCGQTHDHRISQIIAKKFEIVLAGGLDPDNVFEIVKVVNPFGVDVSSGVENNNSKDEELIKRFCENVKLGENYEM</sequence>
<keyword id="KW-0028">Amino-acid biosynthesis</keyword>
<keyword id="KW-0057">Aromatic amino acid biosynthesis</keyword>
<keyword id="KW-0413">Isomerase</keyword>
<keyword id="KW-0822">Tryptophan biosynthesis</keyword>
<protein>
    <recommendedName>
        <fullName evidence="1">N-(5'-phosphoribosyl)anthranilate isomerase</fullName>
        <shortName evidence="1">PRAI</shortName>
        <ecNumber evidence="1">5.3.1.24</ecNumber>
    </recommendedName>
</protein>
<accession>A9AAU4</accession>
<proteinExistence type="inferred from homology"/>